<dbReference type="EMBL" id="X03214">
    <property type="protein sequence ID" value="CAA26958.1"/>
    <property type="molecule type" value="Genomic_DNA"/>
</dbReference>
<dbReference type="EMBL" id="X13303">
    <property type="protein sequence ID" value="CAA31680.1"/>
    <property type="molecule type" value="Genomic_DNA"/>
</dbReference>
<dbReference type="EMBL" id="J01743">
    <property type="protein sequence ID" value="AAA25113.2"/>
    <property type="molecule type" value="Genomic_DNA"/>
</dbReference>
<dbReference type="EMBL" id="M24106">
    <property type="protein sequence ID" value="AAA25106.1"/>
    <property type="molecule type" value="Genomic_DNA"/>
</dbReference>
<dbReference type="PIR" id="S02511">
    <property type="entry name" value="S02511"/>
</dbReference>
<dbReference type="SMR" id="P04668"/>
<dbReference type="GO" id="GO:0009055">
    <property type="term" value="F:electron transfer activity"/>
    <property type="evidence" value="ECO:0007669"/>
    <property type="project" value="InterPro"/>
</dbReference>
<dbReference type="GO" id="GO:0010181">
    <property type="term" value="F:FMN binding"/>
    <property type="evidence" value="ECO:0007669"/>
    <property type="project" value="InterPro"/>
</dbReference>
<dbReference type="GO" id="GO:0009399">
    <property type="term" value="P:nitrogen fixation"/>
    <property type="evidence" value="ECO:0007669"/>
    <property type="project" value="UniProtKB-KW"/>
</dbReference>
<dbReference type="Gene3D" id="3.40.50.360">
    <property type="match status" value="1"/>
</dbReference>
<dbReference type="InterPro" id="IPR001094">
    <property type="entry name" value="Flavdoxin-like"/>
</dbReference>
<dbReference type="InterPro" id="IPR050619">
    <property type="entry name" value="Flavodoxin"/>
</dbReference>
<dbReference type="InterPro" id="IPR008254">
    <property type="entry name" value="Flavodoxin/NO_synth"/>
</dbReference>
<dbReference type="InterPro" id="IPR001226">
    <property type="entry name" value="Flavodoxin_CS"/>
</dbReference>
<dbReference type="InterPro" id="IPR010086">
    <property type="entry name" value="Flavodoxin_lc"/>
</dbReference>
<dbReference type="InterPro" id="IPR029039">
    <property type="entry name" value="Flavoprotein-like_sf"/>
</dbReference>
<dbReference type="NCBIfam" id="TIGR01752">
    <property type="entry name" value="flav_long"/>
    <property type="match status" value="1"/>
</dbReference>
<dbReference type="NCBIfam" id="NF006739">
    <property type="entry name" value="PRK09267.1-5"/>
    <property type="match status" value="1"/>
</dbReference>
<dbReference type="PANTHER" id="PTHR42809:SF1">
    <property type="entry name" value="FLAVODOXIN 1"/>
    <property type="match status" value="1"/>
</dbReference>
<dbReference type="PANTHER" id="PTHR42809">
    <property type="entry name" value="FLAVODOXIN 2"/>
    <property type="match status" value="1"/>
</dbReference>
<dbReference type="Pfam" id="PF00258">
    <property type="entry name" value="Flavodoxin_1"/>
    <property type="match status" value="1"/>
</dbReference>
<dbReference type="PIRSF" id="PIRSF038996">
    <property type="entry name" value="FldA"/>
    <property type="match status" value="1"/>
</dbReference>
<dbReference type="PRINTS" id="PR00369">
    <property type="entry name" value="FLAVODOXIN"/>
</dbReference>
<dbReference type="SUPFAM" id="SSF52218">
    <property type="entry name" value="Flavoproteins"/>
    <property type="match status" value="1"/>
</dbReference>
<dbReference type="PROSITE" id="PS00201">
    <property type="entry name" value="FLAVODOXIN"/>
    <property type="match status" value="1"/>
</dbReference>
<dbReference type="PROSITE" id="PS50902">
    <property type="entry name" value="FLAVODOXIN_LIKE"/>
    <property type="match status" value="1"/>
</dbReference>
<keyword id="KW-0249">Electron transport</keyword>
<keyword id="KW-0285">Flavoprotein</keyword>
<keyword id="KW-0288">FMN</keyword>
<keyword id="KW-0535">Nitrogen fixation</keyword>
<keyword id="KW-0813">Transport</keyword>
<organism>
    <name type="scientific">Klebsiella pneumoniae</name>
    <dbReference type="NCBI Taxonomy" id="573"/>
    <lineage>
        <taxon>Bacteria</taxon>
        <taxon>Pseudomonadati</taxon>
        <taxon>Pseudomonadota</taxon>
        <taxon>Gammaproteobacteria</taxon>
        <taxon>Enterobacterales</taxon>
        <taxon>Enterobacteriaceae</taxon>
        <taxon>Klebsiella/Raoultella group</taxon>
        <taxon>Klebsiella</taxon>
        <taxon>Klebsiella pneumoniae complex</taxon>
    </lineage>
</organism>
<gene>
    <name type="primary">nifF</name>
</gene>
<comment type="function">
    <text>Low-potential electron donor to a number of redox enzymes. NifF is the electron donor to nitrogenase.</text>
</comment>
<comment type="cofactor">
    <cofactor>
        <name>FMN</name>
        <dbReference type="ChEBI" id="CHEBI:58210"/>
    </cofactor>
</comment>
<comment type="similarity">
    <text evidence="2">Belongs to the flavodoxin family.</text>
</comment>
<protein>
    <recommendedName>
        <fullName>Flavodoxin</fullName>
    </recommendedName>
</protein>
<sequence length="176" mass="19113">MANIGIFFGTDTGKTRKIAKMIHKQLGELADAPVNINRTTLDDFMAYPVLLLGTPTLGDGQLPGLEAGCESESWSEFISGLDDASLKGKTVALFGLGDQRGYPDNFVSGMRPLFDALSARGAQMIGSWPNEGYEFSASSALEGDRFVGLVLDQDNQFDQTEARLASWLEEIKRTVL</sequence>
<reference key="1">
    <citation type="journal article" date="1988" name="J. Mol. Biol.">
        <title>Nucleotide sequence of a 24,206-base-pair DNA fragment carrying the entire nitrogen fixation gene cluster of Klebsiella pneumoniae.</title>
        <authorList>
            <person name="Arnold W."/>
            <person name="Rump A."/>
            <person name="Klipp W."/>
            <person name="Priefer U.B."/>
            <person name="Puehler A."/>
        </authorList>
    </citation>
    <scope>NUCLEOTIDE SEQUENCE [GENOMIC DNA]</scope>
</reference>
<reference key="2">
    <citation type="journal article" date="1985" name="Biochem. J.">
        <title>The base sequence of the nifF gene of Klebsiella pneumoniae and homology of the predicted amino acid sequence of its protein product to other flavodoxins.</title>
        <authorList>
            <person name="Drummond M."/>
        </authorList>
    </citation>
    <scope>NUCLEOTIDE SEQUENCE [GENOMIC DNA]</scope>
</reference>
<reference key="3">
    <citation type="journal article" date="1983" name="Nature">
        <title>Positive control and autogenous regulation of the nifLA promoter in Klebsiella pneumoniae.</title>
        <authorList>
            <person name="Drummond M.H."/>
            <person name="Clements J."/>
            <person name="Merrick M."/>
            <person name="Dixon R."/>
        </authorList>
    </citation>
    <scope>NUCLEOTIDE SEQUENCE [GENOMIC DNA] OF 1-35</scope>
</reference>
<reference key="4">
    <citation type="submission" date="1989-07" db="EMBL/GenBank/DDBJ databases">
        <authorList>
            <person name="Collet T.A."/>
            <person name="White T."/>
            <person name="Howard K."/>
            <person name="Orme-Johnson W.H."/>
        </authorList>
    </citation>
    <scope>NUCLEOTIDE SEQUENCE [GENOMIC DNA] OF 134-176</scope>
    <source>
        <strain>UN</strain>
    </source>
</reference>
<feature type="initiator methionine" description="Removed">
    <location>
        <position position="1"/>
    </location>
</feature>
<feature type="chain" id="PRO_0000171638" description="Flavodoxin">
    <location>
        <begin position="2"/>
        <end position="176"/>
    </location>
</feature>
<feature type="domain" description="Flavodoxin-like" evidence="1">
    <location>
        <begin position="4"/>
        <end position="172"/>
    </location>
</feature>
<proteinExistence type="inferred from homology"/>
<accession>P04668</accession>
<name>FLAW_KLEPN</name>
<evidence type="ECO:0000255" key="1">
    <source>
        <dbReference type="PROSITE-ProRule" id="PRU00088"/>
    </source>
</evidence>
<evidence type="ECO:0000305" key="2"/>